<accession>A1WK97</accession>
<name>RL15_VEREI</name>
<comment type="function">
    <text evidence="1">Binds to the 23S rRNA.</text>
</comment>
<comment type="subunit">
    <text evidence="1">Part of the 50S ribosomal subunit.</text>
</comment>
<comment type="similarity">
    <text evidence="1">Belongs to the universal ribosomal protein uL15 family.</text>
</comment>
<reference key="1">
    <citation type="submission" date="2006-12" db="EMBL/GenBank/DDBJ databases">
        <title>Complete sequence of chromosome 1 of Verminephrobacter eiseniae EF01-2.</title>
        <authorList>
            <person name="Copeland A."/>
            <person name="Lucas S."/>
            <person name="Lapidus A."/>
            <person name="Barry K."/>
            <person name="Detter J.C."/>
            <person name="Glavina del Rio T."/>
            <person name="Dalin E."/>
            <person name="Tice H."/>
            <person name="Pitluck S."/>
            <person name="Chertkov O."/>
            <person name="Brettin T."/>
            <person name="Bruce D."/>
            <person name="Han C."/>
            <person name="Tapia R."/>
            <person name="Gilna P."/>
            <person name="Schmutz J."/>
            <person name="Larimer F."/>
            <person name="Land M."/>
            <person name="Hauser L."/>
            <person name="Kyrpides N."/>
            <person name="Kim E."/>
            <person name="Stahl D."/>
            <person name="Richardson P."/>
        </authorList>
    </citation>
    <scope>NUCLEOTIDE SEQUENCE [LARGE SCALE GENOMIC DNA]</scope>
    <source>
        <strain>EF01-2</strain>
    </source>
</reference>
<keyword id="KW-1185">Reference proteome</keyword>
<keyword id="KW-0687">Ribonucleoprotein</keyword>
<keyword id="KW-0689">Ribosomal protein</keyword>
<keyword id="KW-0694">RNA-binding</keyword>
<keyword id="KW-0699">rRNA-binding</keyword>
<dbReference type="EMBL" id="CP000542">
    <property type="protein sequence ID" value="ABM58054.1"/>
    <property type="molecule type" value="Genomic_DNA"/>
</dbReference>
<dbReference type="RefSeq" id="WP_011810057.1">
    <property type="nucleotide sequence ID" value="NC_008786.1"/>
</dbReference>
<dbReference type="SMR" id="A1WK97"/>
<dbReference type="STRING" id="391735.Veis_2306"/>
<dbReference type="GeneID" id="76460871"/>
<dbReference type="KEGG" id="vei:Veis_2306"/>
<dbReference type="eggNOG" id="COG0200">
    <property type="taxonomic scope" value="Bacteria"/>
</dbReference>
<dbReference type="HOGENOM" id="CLU_055188_4_2_4"/>
<dbReference type="OrthoDB" id="9810293at2"/>
<dbReference type="Proteomes" id="UP000000374">
    <property type="component" value="Chromosome"/>
</dbReference>
<dbReference type="GO" id="GO:0022625">
    <property type="term" value="C:cytosolic large ribosomal subunit"/>
    <property type="evidence" value="ECO:0007669"/>
    <property type="project" value="TreeGrafter"/>
</dbReference>
<dbReference type="GO" id="GO:0019843">
    <property type="term" value="F:rRNA binding"/>
    <property type="evidence" value="ECO:0007669"/>
    <property type="project" value="UniProtKB-UniRule"/>
</dbReference>
<dbReference type="GO" id="GO:0003735">
    <property type="term" value="F:structural constituent of ribosome"/>
    <property type="evidence" value="ECO:0007669"/>
    <property type="project" value="InterPro"/>
</dbReference>
<dbReference type="GO" id="GO:0006412">
    <property type="term" value="P:translation"/>
    <property type="evidence" value="ECO:0007669"/>
    <property type="project" value="UniProtKB-UniRule"/>
</dbReference>
<dbReference type="Gene3D" id="3.100.10.10">
    <property type="match status" value="1"/>
</dbReference>
<dbReference type="HAMAP" id="MF_01341">
    <property type="entry name" value="Ribosomal_uL15"/>
    <property type="match status" value="1"/>
</dbReference>
<dbReference type="InterPro" id="IPR030878">
    <property type="entry name" value="Ribosomal_uL15"/>
</dbReference>
<dbReference type="InterPro" id="IPR021131">
    <property type="entry name" value="Ribosomal_uL15/eL18"/>
</dbReference>
<dbReference type="InterPro" id="IPR036227">
    <property type="entry name" value="Ribosomal_uL15/eL18_sf"/>
</dbReference>
<dbReference type="InterPro" id="IPR005749">
    <property type="entry name" value="Ribosomal_uL15_bac-type"/>
</dbReference>
<dbReference type="NCBIfam" id="TIGR01071">
    <property type="entry name" value="rplO_bact"/>
    <property type="match status" value="1"/>
</dbReference>
<dbReference type="PANTHER" id="PTHR12934">
    <property type="entry name" value="50S RIBOSOMAL PROTEIN L15"/>
    <property type="match status" value="1"/>
</dbReference>
<dbReference type="PANTHER" id="PTHR12934:SF11">
    <property type="entry name" value="LARGE RIBOSOMAL SUBUNIT PROTEIN UL15M"/>
    <property type="match status" value="1"/>
</dbReference>
<dbReference type="Pfam" id="PF00828">
    <property type="entry name" value="Ribosomal_L27A"/>
    <property type="match status" value="1"/>
</dbReference>
<dbReference type="SUPFAM" id="SSF52080">
    <property type="entry name" value="Ribosomal proteins L15p and L18e"/>
    <property type="match status" value="1"/>
</dbReference>
<protein>
    <recommendedName>
        <fullName evidence="1">Large ribosomal subunit protein uL15</fullName>
    </recommendedName>
    <alternativeName>
        <fullName evidence="3">50S ribosomal protein L15</fullName>
    </alternativeName>
</protein>
<evidence type="ECO:0000255" key="1">
    <source>
        <dbReference type="HAMAP-Rule" id="MF_01341"/>
    </source>
</evidence>
<evidence type="ECO:0000256" key="2">
    <source>
        <dbReference type="SAM" id="MobiDB-lite"/>
    </source>
</evidence>
<evidence type="ECO:0000305" key="3"/>
<organism>
    <name type="scientific">Verminephrobacter eiseniae (strain EF01-2)</name>
    <dbReference type="NCBI Taxonomy" id="391735"/>
    <lineage>
        <taxon>Bacteria</taxon>
        <taxon>Pseudomonadati</taxon>
        <taxon>Pseudomonadota</taxon>
        <taxon>Betaproteobacteria</taxon>
        <taxon>Burkholderiales</taxon>
        <taxon>Comamonadaceae</taxon>
        <taxon>Verminephrobacter</taxon>
    </lineage>
</organism>
<proteinExistence type="inferred from homology"/>
<gene>
    <name evidence="1" type="primary">rplO</name>
    <name type="ordered locus">Veis_2306</name>
</gene>
<feature type="chain" id="PRO_1000054560" description="Large ribosomal subunit protein uL15">
    <location>
        <begin position="1"/>
        <end position="143"/>
    </location>
</feature>
<feature type="region of interest" description="Disordered" evidence="2">
    <location>
        <begin position="1"/>
        <end position="56"/>
    </location>
</feature>
<feature type="compositionally biased region" description="Gly residues" evidence="2">
    <location>
        <begin position="21"/>
        <end position="31"/>
    </location>
</feature>
<sequence>MQLNSIKPAAGAKHAKRRVGRGIGSGLGKTAGRGHKGQKSRAGGYHKVGFEGGQMPLQRRLPKRGFKSQSLRFNAEVTLTTLDRLGLAEVDVLALKQAGLVGELIKVVKVIKSGALNRAVKLSGVGVTAGAKAAIEAAGGSVA</sequence>